<keyword id="KW-0002">3D-structure</keyword>
<keyword id="KW-0378">Hydrolase</keyword>
<keyword id="KW-1185">Reference proteome</keyword>
<sequence length="332" mass="36767">MGSSGSMVKPISGFLTALIQYPVPVVESRADIDKQIQQIIKTIHSTKSGYPGLELIVFPEYSTQGLNTKKWTTEEFLCTVPGPETDLFAEACKESKVYGVFSIMEKNPDGGEPYNTAVIIDPQGEMILKYRKLNPWVPVEPWKAGDLGLPVCDGPGGSKLAVCICHDGMFPEVAREAAYKGANVLIRISGYSTQVSEQWMLTNRSNAWQNLMYTLSVNLAGYDGVFYYFGEGQVCNFDGTTLVQGHRNPWEIVTAEVYPELADQARLGWGLENNIYNLGSRGYVATPGGVKENPYTFVKDLAEGKYKVPWEDEIKVKDGSIYGYPVKKTIHS</sequence>
<protein>
    <recommendedName>
        <fullName evidence="1">Formamidase</fullName>
        <ecNumber evidence="1">3.5.1.49</ecNumber>
    </recommendedName>
    <alternativeName>
        <fullName evidence="1">Formamide amidohydrolase</fullName>
    </alternativeName>
</protein>
<feature type="chain" id="PRO_0000204063" description="Formamidase">
    <location>
        <begin position="1"/>
        <end position="332"/>
    </location>
</feature>
<feature type="domain" description="CN hydrolase" evidence="2">
    <location>
        <begin position="14"/>
        <end position="259"/>
    </location>
</feature>
<feature type="active site" description="Proton acceptor" evidence="1">
    <location>
        <position position="60"/>
    </location>
</feature>
<feature type="active site" description="Proton donor" evidence="1">
    <location>
        <position position="132"/>
    </location>
</feature>
<feature type="active site" description="Nucleophile" evidence="1">
    <location>
        <position position="165"/>
    </location>
</feature>
<feature type="strand" evidence="4">
    <location>
        <begin position="13"/>
        <end position="19"/>
    </location>
</feature>
<feature type="helix" evidence="4">
    <location>
        <begin position="29"/>
        <end position="49"/>
    </location>
</feature>
<feature type="strand" evidence="4">
    <location>
        <begin position="53"/>
        <end position="57"/>
    </location>
</feature>
<feature type="turn" evidence="4">
    <location>
        <begin position="60"/>
        <end position="64"/>
    </location>
</feature>
<feature type="turn" evidence="4">
    <location>
        <begin position="68"/>
        <end position="72"/>
    </location>
</feature>
<feature type="helix" evidence="4">
    <location>
        <begin position="74"/>
        <end position="76"/>
    </location>
</feature>
<feature type="strand" evidence="4">
    <location>
        <begin position="80"/>
        <end position="82"/>
    </location>
</feature>
<feature type="helix" evidence="4">
    <location>
        <begin position="83"/>
        <end position="95"/>
    </location>
</feature>
<feature type="strand" evidence="4">
    <location>
        <begin position="98"/>
        <end position="105"/>
    </location>
</feature>
<feature type="strand" evidence="4">
    <location>
        <begin position="110"/>
        <end position="112"/>
    </location>
</feature>
<feature type="strand" evidence="4">
    <location>
        <begin position="114"/>
        <end position="120"/>
    </location>
</feature>
<feature type="strand" evidence="4">
    <location>
        <begin position="126"/>
        <end position="131"/>
    </location>
</feature>
<feature type="turn" evidence="4">
    <location>
        <begin position="137"/>
        <end position="139"/>
    </location>
</feature>
<feature type="strand" evidence="3">
    <location>
        <begin position="151"/>
        <end position="153"/>
    </location>
</feature>
<feature type="helix" evidence="4">
    <location>
        <begin position="155"/>
        <end position="157"/>
    </location>
</feature>
<feature type="strand" evidence="4">
    <location>
        <begin position="159"/>
        <end position="164"/>
    </location>
</feature>
<feature type="helix" evidence="4">
    <location>
        <begin position="165"/>
        <end position="169"/>
    </location>
</feature>
<feature type="helix" evidence="4">
    <location>
        <begin position="171"/>
        <end position="179"/>
    </location>
</feature>
<feature type="strand" evidence="4">
    <location>
        <begin position="183"/>
        <end position="189"/>
    </location>
</feature>
<feature type="helix" evidence="4">
    <location>
        <begin position="193"/>
        <end position="195"/>
    </location>
</feature>
<feature type="helix" evidence="4">
    <location>
        <begin position="196"/>
        <end position="209"/>
    </location>
</feature>
<feature type="strand" evidence="4">
    <location>
        <begin position="213"/>
        <end position="218"/>
    </location>
</feature>
<feature type="strand" evidence="4">
    <location>
        <begin position="220"/>
        <end position="222"/>
    </location>
</feature>
<feature type="strand" evidence="4">
    <location>
        <begin position="227"/>
        <end position="229"/>
    </location>
</feature>
<feature type="strand" evidence="4">
    <location>
        <begin position="233"/>
        <end position="235"/>
    </location>
</feature>
<feature type="strand" evidence="4">
    <location>
        <begin position="241"/>
        <end position="244"/>
    </location>
</feature>
<feature type="strand" evidence="4">
    <location>
        <begin position="252"/>
        <end position="257"/>
    </location>
</feature>
<feature type="helix" evidence="4">
    <location>
        <begin position="259"/>
        <end position="268"/>
    </location>
</feature>
<feature type="helix" evidence="4">
    <location>
        <begin position="274"/>
        <end position="277"/>
    </location>
</feature>
<feature type="turn" evidence="4">
    <location>
        <begin position="283"/>
        <end position="285"/>
    </location>
</feature>
<feature type="helix" evidence="4">
    <location>
        <begin position="296"/>
        <end position="302"/>
    </location>
</feature>
<feature type="helix" evidence="4">
    <location>
        <begin position="311"/>
        <end position="313"/>
    </location>
</feature>
<feature type="helix" evidence="4">
    <location>
        <begin position="320"/>
        <end position="322"/>
    </location>
</feature>
<dbReference type="EC" id="3.5.1.49" evidence="1"/>
<dbReference type="EMBL" id="AE016877">
    <property type="protein sequence ID" value="AAP10859.1"/>
    <property type="molecule type" value="Genomic_DNA"/>
</dbReference>
<dbReference type="RefSeq" id="NP_833658.1">
    <property type="nucleotide sequence ID" value="NC_004722.1"/>
</dbReference>
<dbReference type="RefSeq" id="WP_000535802.1">
    <property type="nucleotide sequence ID" value="NZ_CP138336.1"/>
</dbReference>
<dbReference type="PDB" id="5G3O">
    <property type="method" value="X-ray"/>
    <property type="resolution" value="2.15 A"/>
    <property type="chains" value="A/B/C/D/E/F=1-332"/>
</dbReference>
<dbReference type="PDB" id="5G3P">
    <property type="method" value="X-ray"/>
    <property type="resolution" value="1.78 A"/>
    <property type="chains" value="A/B/C/D/E/F=1-332"/>
</dbReference>
<dbReference type="PDBsum" id="5G3O"/>
<dbReference type="PDBsum" id="5G3P"/>
<dbReference type="SMR" id="P59701"/>
<dbReference type="STRING" id="226900.BC_3939"/>
<dbReference type="KEGG" id="bce:BC3939"/>
<dbReference type="PATRIC" id="fig|226900.8.peg.4063"/>
<dbReference type="HOGENOM" id="CLU_071797_0_0_9"/>
<dbReference type="OrthoDB" id="9811121at2"/>
<dbReference type="BRENDA" id="3.5.1.49">
    <property type="organism ID" value="648"/>
</dbReference>
<dbReference type="Proteomes" id="UP000001417">
    <property type="component" value="Chromosome"/>
</dbReference>
<dbReference type="GO" id="GO:0004328">
    <property type="term" value="F:formamidase activity"/>
    <property type="evidence" value="ECO:0007669"/>
    <property type="project" value="UniProtKB-UniRule"/>
</dbReference>
<dbReference type="GO" id="GO:0050126">
    <property type="term" value="F:N-carbamoylputrescine amidase activity"/>
    <property type="evidence" value="ECO:0000318"/>
    <property type="project" value="GO_Central"/>
</dbReference>
<dbReference type="GO" id="GO:0033388">
    <property type="term" value="P:putrescine biosynthetic process from arginine"/>
    <property type="evidence" value="ECO:0000318"/>
    <property type="project" value="GO_Central"/>
</dbReference>
<dbReference type="CDD" id="cd07565">
    <property type="entry name" value="aliphatic_amidase"/>
    <property type="match status" value="1"/>
</dbReference>
<dbReference type="Gene3D" id="3.60.110.10">
    <property type="entry name" value="Carbon-nitrogen hydrolase"/>
    <property type="match status" value="1"/>
</dbReference>
<dbReference type="HAMAP" id="MF_01243">
    <property type="entry name" value="Formamidase"/>
    <property type="match status" value="1"/>
</dbReference>
<dbReference type="InterPro" id="IPR050345">
    <property type="entry name" value="Aliph_Amidase/BUP"/>
</dbReference>
<dbReference type="InterPro" id="IPR003010">
    <property type="entry name" value="C-N_Hydrolase"/>
</dbReference>
<dbReference type="InterPro" id="IPR036526">
    <property type="entry name" value="C-N_Hydrolase_sf"/>
</dbReference>
<dbReference type="InterPro" id="IPR022843">
    <property type="entry name" value="Formamidase"/>
</dbReference>
<dbReference type="NCBIfam" id="NF009803">
    <property type="entry name" value="PRK13287.1"/>
    <property type="match status" value="1"/>
</dbReference>
<dbReference type="PANTHER" id="PTHR43674:SF15">
    <property type="entry name" value="FORMAMIDASE"/>
    <property type="match status" value="1"/>
</dbReference>
<dbReference type="PANTHER" id="PTHR43674">
    <property type="entry name" value="NITRILASE C965.09-RELATED"/>
    <property type="match status" value="1"/>
</dbReference>
<dbReference type="Pfam" id="PF00795">
    <property type="entry name" value="CN_hydrolase"/>
    <property type="match status" value="1"/>
</dbReference>
<dbReference type="SUPFAM" id="SSF56317">
    <property type="entry name" value="Carbon-nitrogen hydrolase"/>
    <property type="match status" value="1"/>
</dbReference>
<dbReference type="PROSITE" id="PS50263">
    <property type="entry name" value="CN_HYDROLASE"/>
    <property type="match status" value="1"/>
</dbReference>
<organism>
    <name type="scientific">Bacillus cereus (strain ATCC 14579 / DSM 31 / CCUG 7414 / JCM 2152 / NBRC 15305 / NCIMB 9373 / NCTC 2599 / NRRL B-3711)</name>
    <dbReference type="NCBI Taxonomy" id="226900"/>
    <lineage>
        <taxon>Bacteria</taxon>
        <taxon>Bacillati</taxon>
        <taxon>Bacillota</taxon>
        <taxon>Bacilli</taxon>
        <taxon>Bacillales</taxon>
        <taxon>Bacillaceae</taxon>
        <taxon>Bacillus</taxon>
        <taxon>Bacillus cereus group</taxon>
    </lineage>
</organism>
<name>AMIF_BACCR</name>
<comment type="function">
    <text evidence="1">Is an aliphatic amidase with a restricted substrate specificity, as it only hydrolyzes formamide.</text>
</comment>
<comment type="catalytic activity">
    <reaction evidence="1">
        <text>formamide + H2O = formate + NH4(+)</text>
        <dbReference type="Rhea" id="RHEA:21948"/>
        <dbReference type="ChEBI" id="CHEBI:15377"/>
        <dbReference type="ChEBI" id="CHEBI:15740"/>
        <dbReference type="ChEBI" id="CHEBI:16397"/>
        <dbReference type="ChEBI" id="CHEBI:28938"/>
        <dbReference type="EC" id="3.5.1.49"/>
    </reaction>
</comment>
<comment type="similarity">
    <text evidence="1">Belongs to the carbon-nitrogen hydrolase superfamily. Aliphatic amidase family.</text>
</comment>
<accession>P59701</accession>
<reference key="1">
    <citation type="journal article" date="2003" name="Nature">
        <title>Genome sequence of Bacillus cereus and comparative analysis with Bacillus anthracis.</title>
        <authorList>
            <person name="Ivanova N."/>
            <person name="Sorokin A."/>
            <person name="Anderson I."/>
            <person name="Galleron N."/>
            <person name="Candelon B."/>
            <person name="Kapatral V."/>
            <person name="Bhattacharyya A."/>
            <person name="Reznik G."/>
            <person name="Mikhailova N."/>
            <person name="Lapidus A."/>
            <person name="Chu L."/>
            <person name="Mazur M."/>
            <person name="Goltsman E."/>
            <person name="Larsen N."/>
            <person name="D'Souza M."/>
            <person name="Walunas T."/>
            <person name="Grechkin Y."/>
            <person name="Pusch G."/>
            <person name="Haselkorn R."/>
            <person name="Fonstein M."/>
            <person name="Ehrlich S.D."/>
            <person name="Overbeek R."/>
            <person name="Kyrpides N.C."/>
        </authorList>
    </citation>
    <scope>NUCLEOTIDE SEQUENCE [LARGE SCALE GENOMIC DNA]</scope>
    <source>
        <strain>ATCC 14579 / DSM 31 / CCUG 7414 / JCM 2152 / NBRC 15305 / NCIMB 9373 / NCTC 2599 / NRRL B-3711</strain>
    </source>
</reference>
<evidence type="ECO:0000255" key="1">
    <source>
        <dbReference type="HAMAP-Rule" id="MF_01243"/>
    </source>
</evidence>
<evidence type="ECO:0000255" key="2">
    <source>
        <dbReference type="PROSITE-ProRule" id="PRU00054"/>
    </source>
</evidence>
<evidence type="ECO:0007829" key="3">
    <source>
        <dbReference type="PDB" id="5G3O"/>
    </source>
</evidence>
<evidence type="ECO:0007829" key="4">
    <source>
        <dbReference type="PDB" id="5G3P"/>
    </source>
</evidence>
<gene>
    <name evidence="1" type="primary">amiF</name>
    <name type="ordered locus">BC_3939</name>
</gene>
<proteinExistence type="evidence at protein level"/>